<feature type="chain" id="PRO_0000109769" description="Delta-1-pyrroline-5-carboxylate synthase">
    <location>
        <begin position="1"/>
        <end position="795"/>
    </location>
</feature>
<feature type="region of interest" description="Glutamate 5-kinase">
    <location>
        <begin position="1"/>
        <end position="361"/>
    </location>
</feature>
<feature type="region of interest" description="Gamma-glutamyl phosphate reductase">
    <location>
        <begin position="362"/>
        <end position="795"/>
    </location>
</feature>
<feature type="binding site" evidence="1">
    <location>
        <position position="117"/>
    </location>
    <ligand>
        <name>substrate</name>
    </ligand>
</feature>
<feature type="binding site" evidence="1">
    <location>
        <position position="223"/>
    </location>
    <ligand>
        <name>substrate</name>
    </ligand>
</feature>
<feature type="binding site" evidence="1">
    <location>
        <position position="246"/>
    </location>
    <ligand>
        <name>substrate</name>
    </ligand>
</feature>
<feature type="binding site" evidence="1">
    <location>
        <begin position="266"/>
        <end position="267"/>
    </location>
    <ligand>
        <name>ATP</name>
        <dbReference type="ChEBI" id="CHEBI:30616"/>
    </ligand>
</feature>
<feature type="binding site" evidence="1">
    <location>
        <begin position="305"/>
        <end position="311"/>
    </location>
    <ligand>
        <name>ATP</name>
        <dbReference type="ChEBI" id="CHEBI:30616"/>
    </ligand>
</feature>
<feature type="modified residue" description="N6-succinyllysine" evidence="2">
    <location>
        <position position="311"/>
    </location>
</feature>
<feature type="modified residue" description="N6-succinyllysine" evidence="2">
    <location>
        <position position="347"/>
    </location>
</feature>
<feature type="modified residue" description="N6-succinyllysine" evidence="2">
    <location>
        <position position="550"/>
    </location>
</feature>
<feature type="splice variant" id="VSP_005215" description="In isoform Short." evidence="15 16">
    <location>
        <begin position="239"/>
        <end position="240"/>
    </location>
</feature>
<feature type="sequence variant" id="VAR_038482" description="In ARCL3A; reduction of activity; loss of punctate pattern in mitochondria when overexpressed; dbSNP:rs121434582." evidence="4">
    <original>R</original>
    <variation>Q</variation>
    <location>
        <position position="84"/>
    </location>
</feature>
<feature type="sequence variant" id="VAR_075884" description="In ARCL3A; loss of punctate pattern in mitochondria when overexpressed." evidence="8">
    <original>G</original>
    <variation>R</variation>
    <location>
        <position position="93"/>
    </location>
</feature>
<feature type="sequence variant" id="VAR_075885" description="In SPG9A; dbSNP:rs863224945." evidence="10">
    <original>V</original>
    <variation>A</variation>
    <location>
        <position position="120"/>
    </location>
</feature>
<feature type="sequence variant" id="VAR_075886" description="In SPG9B; dbSNP:rs768323248." evidence="10">
    <original>R</original>
    <variation>H</variation>
    <location>
        <position position="128"/>
    </location>
</feature>
<feature type="sequence variant" id="VAR_075887" description="In ADCL3; dbSNP:rs863225045." evidence="12">
    <original>R</original>
    <variation>L</variation>
    <location>
        <position position="138"/>
    </location>
</feature>
<feature type="sequence variant" id="VAR_075888" description="In ADCL3; loss of punctate pattern in mitochondria when overexpressed; no effect on interaction with wild-type protein; dbSNP:rs863225045." evidence="12">
    <original>R</original>
    <variation>Q</variation>
    <location>
        <position position="138"/>
    </location>
</feature>
<feature type="sequence variant" id="VAR_075889" description="In ADCL3; no effect on protein abundance; decreased intracellular proline levels; loss of filament formation; dbSNP:rs863225044." evidence="12">
    <original>R</original>
    <variation>W</variation>
    <location>
        <position position="138"/>
    </location>
</feature>
<feature type="sequence variant" id="VAR_075890" description="In SPG9A; decreased protein abundance; no effect on localization to the mitochondrion; altered homohexamerization; loss of glutamate 5-kinase activity; no effect on glutamate-5-semialdehyde dehydrogenase activity; decreased amino acid biosynthetic process; dbSNP:rs864321669." evidence="11">
    <original>V</original>
    <variation>L</variation>
    <location>
        <position position="243"/>
    </location>
</feature>
<feature type="sequence variant" id="VAR_075891" description="In SPG9A; altered homohexamerization; no effect on localization to the mitochondrion; loss of glutamate 5-kinase activity; no effect on glutamate-5-semialdehyde dehydrogenase activity; decreased amino acid biosynthetic process; dbSNP:rs864321670." evidence="10 11">
    <original>R</original>
    <variation>Q</variation>
    <location>
        <position position="252"/>
    </location>
</feature>
<feature type="sequence variant" id="VAR_051792" description="In ARCL3A; benign; dbSNP:rs2275272." evidence="5 6 8">
    <original>T</original>
    <variation>I</variation>
    <location>
        <position position="299"/>
    </location>
</feature>
<feature type="sequence variant" id="VAR_051793" description="In dbSNP:rs3765571." evidence="6">
    <original>S</original>
    <variation>Y</variation>
    <location>
        <position position="372"/>
    </location>
</feature>
<feature type="sequence variant" id="VAR_075892" description="In SPG9B; dbSNP:rs869320690." evidence="10">
    <original>L</original>
    <variation>P</variation>
    <location>
        <position position="637"/>
    </location>
</feature>
<feature type="sequence variant" id="VAR_075893" description="In SPG9A." evidence="10">
    <original>S</original>
    <variation>F</variation>
    <location>
        <position position="652"/>
    </location>
</feature>
<feature type="sequence variant" id="VAR_075894" description="In SPG9A; dbSNP:rs766264810." evidence="10">
    <original>R</original>
    <variation>L</variation>
    <location>
        <position position="665"/>
    </location>
</feature>
<feature type="sequence variant" id="VAR_075895" description="In SPG9B; dbSNP:rs752669339." evidence="10">
    <original>D</original>
    <variation>H</variation>
    <location>
        <position position="715"/>
    </location>
</feature>
<feature type="sequence variant" id="VAR_075896" description="In ARCL3A; dbSNP:rs774047299." evidence="9">
    <original>Y</original>
    <variation>C</variation>
    <location>
        <position position="782"/>
    </location>
</feature>
<feature type="sequence variant" id="VAR_058006" description="In ARCL3A; does not affect proline and ornithine biosynthetic activity; dbSNP:rs121434583." evidence="7">
    <original>H</original>
    <variation>Y</variation>
    <location>
        <position position="784"/>
    </location>
</feature>
<feature type="mutagenesis site" description="No effect on punctate pattern in the mitochondria; when associated with A-247 and A-311." evidence="13">
    <original>K</original>
    <variation>A</variation>
    <location>
        <position position="76"/>
    </location>
</feature>
<feature type="mutagenesis site" description="No effect on punctate pattern in the mitochondria; when associated with A-76 and A-311." evidence="13">
    <original>D</original>
    <variation>A</variation>
    <location>
        <position position="247"/>
    </location>
</feature>
<feature type="mutagenesis site" description="No effect on punctate pattern in the mitochondria; when associated with A-247 and A-247." evidence="13">
    <original>K</original>
    <variation>A</variation>
    <location>
        <position position="311"/>
    </location>
</feature>
<feature type="mutagenesis site" description="Catalytically inactive; no effect on filament formation; no effect on punctate pattern in the mitochondria." evidence="13 14">
    <original>C</original>
    <variation>A</variation>
    <location>
        <position position="612"/>
    </location>
</feature>
<feature type="sequence conflict" description="In Ref. 3; BAG35201." evidence="17" ref="3">
    <original>E</original>
    <variation>K</variation>
    <location>
        <position position="87"/>
    </location>
</feature>
<feature type="sequence conflict" description="In Ref. 1; CAA64224." evidence="17" ref="1">
    <original>R</original>
    <variation>T</variation>
    <location>
        <position position="126"/>
    </location>
</feature>
<feature type="sequence conflict" description="In Ref. 1; CAA64224." evidence="17" ref="1">
    <original>S</original>
    <variation>P</variation>
    <location>
        <position position="266"/>
    </location>
</feature>
<feature type="sequence conflict" description="In Ref. 1; CAA64224." evidence="17" ref="1">
    <original>T</original>
    <variation>P</variation>
    <location>
        <position position="299"/>
    </location>
</feature>
<feature type="sequence conflict" description="In Ref. 1; CAA64224." evidence="17" ref="1">
    <original>MGG</original>
    <variation>NGC</variation>
    <location>
        <begin position="305"/>
        <end position="307"/>
    </location>
</feature>
<feature type="sequence conflict" description="In Ref. 1; CAA64224." evidence="17" ref="1">
    <original>AA</original>
    <variation>ST</variation>
    <location>
        <begin position="314"/>
        <end position="315"/>
    </location>
</feature>
<feature type="sequence conflict" description="In Ref. 1; CAA64224." evidence="17" ref="1">
    <original>LPQVAAL</original>
    <variation>PTPGGSF</variation>
    <location>
        <begin position="487"/>
        <end position="493"/>
    </location>
</feature>
<feature type="helix" evidence="18">
    <location>
        <begin position="363"/>
        <end position="379"/>
    </location>
</feature>
<feature type="helix" evidence="18">
    <location>
        <begin position="382"/>
        <end position="398"/>
    </location>
</feature>
<feature type="helix" evidence="18">
    <location>
        <begin position="400"/>
        <end position="414"/>
    </location>
</feature>
<feature type="turn" evidence="18">
    <location>
        <begin position="415"/>
        <end position="417"/>
    </location>
</feature>
<feature type="helix" evidence="18">
    <location>
        <begin position="420"/>
        <end position="424"/>
    </location>
</feature>
<feature type="helix" evidence="18">
    <location>
        <begin position="430"/>
        <end position="446"/>
    </location>
</feature>
<feature type="strand" evidence="18">
    <location>
        <begin position="454"/>
        <end position="461"/>
    </location>
</feature>
<feature type="strand" evidence="18">
    <location>
        <begin position="464"/>
        <end position="472"/>
    </location>
</feature>
<feature type="strand" evidence="18">
    <location>
        <begin position="475"/>
        <end position="482"/>
    </location>
</feature>
<feature type="helix" evidence="18">
    <location>
        <begin position="486"/>
        <end position="497"/>
    </location>
</feature>
<feature type="strand" evidence="18">
    <location>
        <begin position="500"/>
        <end position="504"/>
    </location>
</feature>
<feature type="helix" evidence="18">
    <location>
        <begin position="507"/>
        <end position="509"/>
    </location>
</feature>
<feature type="helix" evidence="18">
    <location>
        <begin position="510"/>
        <end position="525"/>
    </location>
</feature>
<feature type="turn" evidence="18">
    <location>
        <begin position="526"/>
        <end position="528"/>
    </location>
</feature>
<feature type="helix" evidence="18">
    <location>
        <begin position="530"/>
        <end position="532"/>
    </location>
</feature>
<feature type="strand" evidence="18">
    <location>
        <begin position="533"/>
        <end position="535"/>
    </location>
</feature>
<feature type="strand" evidence="18">
    <location>
        <begin position="553"/>
        <end position="559"/>
    </location>
</feature>
<feature type="helix" evidence="18">
    <location>
        <begin position="561"/>
        <end position="570"/>
    </location>
</feature>
<feature type="strand" evidence="18">
    <location>
        <begin position="572"/>
        <end position="574"/>
    </location>
</feature>
<feature type="strand" evidence="18">
    <location>
        <begin position="584"/>
        <end position="588"/>
    </location>
</feature>
<feature type="turn" evidence="18">
    <location>
        <begin position="594"/>
        <end position="596"/>
    </location>
</feature>
<feature type="helix" evidence="18">
    <location>
        <begin position="597"/>
        <end position="606"/>
    </location>
</feature>
<feature type="strand" evidence="18">
    <location>
        <begin position="614"/>
        <end position="621"/>
    </location>
</feature>
<feature type="helix" evidence="18">
    <location>
        <begin position="622"/>
        <end position="624"/>
    </location>
</feature>
<feature type="helix" evidence="18">
    <location>
        <begin position="628"/>
        <end position="639"/>
    </location>
</feature>
<feature type="strand" evidence="18">
    <location>
        <begin position="643"/>
        <end position="646"/>
    </location>
</feature>
<feature type="helix" evidence="18">
    <location>
        <begin position="648"/>
        <end position="651"/>
    </location>
</feature>
<feature type="strand" evidence="18">
    <location>
        <begin position="670"/>
        <end position="680"/>
    </location>
</feature>
<feature type="helix" evidence="18">
    <location>
        <begin position="681"/>
        <end position="691"/>
    </location>
</feature>
<feature type="strand" evidence="18">
    <location>
        <begin position="694"/>
        <end position="700"/>
    </location>
</feature>
<feature type="helix" evidence="18">
    <location>
        <begin position="704"/>
        <end position="713"/>
    </location>
</feature>
<feature type="strand" evidence="18">
    <location>
        <begin position="716"/>
        <end position="723"/>
    </location>
</feature>
<feature type="helix" evidence="18">
    <location>
        <begin position="725"/>
        <end position="727"/>
    </location>
</feature>
<feature type="turn" evidence="18">
    <location>
        <begin position="730"/>
        <end position="734"/>
    </location>
</feature>
<feature type="strand" evidence="18">
    <location>
        <begin position="745"/>
        <end position="747"/>
    </location>
</feature>
<feature type="helix" evidence="18">
    <location>
        <begin position="754"/>
        <end position="757"/>
    </location>
</feature>
<feature type="strand" evidence="18">
    <location>
        <begin position="758"/>
        <end position="765"/>
    </location>
</feature>
<feature type="helix" evidence="18">
    <location>
        <begin position="771"/>
        <end position="774"/>
    </location>
</feature>
<sequence length="795" mass="87302">MLSQVYRCGFQPFNQHLLPWVKCTTVFRSHCIQPSVIRHVRSWSNIPFITVPLSRTHGKSFAHRSELKHAKRIVVKLGSAVVTRGDECGLALGRLASIVEQVSVLQNQGREMMLVTSGAVAFGKQRLRHEILLSQSVRQALHSGQNQLKEMAIPVLEARACAAAGQSGLMALYEAMFTQYSICAAQILVTNLDFHDEQKRRNLNGTLHELLRMNIVPIVNTNDAVVPPAEPNSDLQGVNVISVKDNDSLAARLAVEMKTDLLIVLSDVEGLFDSPPGSDDAKLIDIFYPGDQQSVTFGTKSRVGMGGMEAKVKAALWALQGGTSVVIANGTHPKVSGHVITDIVEGKKVGTFFSEVKPAGPTVEQQGEMARSGGRMLATLEPEQRAEIIHHLADLLTDQRDEILLANKKDLEEAEGRLAAPLLKRLSLSTSKLNSLAIGLRQIAASSQDSVGRVLRRTRIAKNLELEQVTVPIGVLLVIFESRPDCLPQVAALAIASGNGLLLKGGKEAAHSNRILHLLTQEALSIHGVKEAVQLVNTREEVEDLCRLDKMIDLIIPRGSSQLVRDIQKAAKGIPVMGHSEGICHMYVDSEASVDKVTRLVRDSKCEYPAACNALETLLIHRDLLRTPLFDQIIDMLRVEQVKIHAGPKFASYLTFSPSEVKSLRTEYGDLELCIEVVDNVQDAIDHIHKYGSSHTDVIVTEDENTAEFFLQHVDSACVFWNASTRFSDGYRFGLGAEVGISTSRIHARGPVGLEGLLTTKWLLRGKDHVVSDFSEHGSLKYLHENLPIPQRNTN</sequence>
<name>P5CS_HUMAN</name>
<proteinExistence type="evidence at protein level"/>
<accession>P54886</accession>
<accession>B2R5Q4</accession>
<accession>B7Z350</accession>
<accession>B7Z5X8</accession>
<accession>B7ZLP1</accession>
<accession>D3DR44</accession>
<accession>O95952</accession>
<accession>Q3KQU2</accession>
<accession>Q5T566</accession>
<accession>Q5T567</accession>
<accession>Q9UM72</accession>
<evidence type="ECO:0000250" key="1"/>
<evidence type="ECO:0000250" key="2">
    <source>
        <dbReference type="UniProtKB" id="Q9Z110"/>
    </source>
</evidence>
<evidence type="ECO:0000269" key="3">
    <source>
    </source>
</evidence>
<evidence type="ECO:0000269" key="4">
    <source>
    </source>
</evidence>
<evidence type="ECO:0000269" key="5">
    <source>
    </source>
</evidence>
<evidence type="ECO:0000269" key="6">
    <source>
    </source>
</evidence>
<evidence type="ECO:0000269" key="7">
    <source>
    </source>
</evidence>
<evidence type="ECO:0000269" key="8">
    <source>
    </source>
</evidence>
<evidence type="ECO:0000269" key="9">
    <source>
    </source>
</evidence>
<evidence type="ECO:0000269" key="10">
    <source>
    </source>
</evidence>
<evidence type="ECO:0000269" key="11">
    <source>
    </source>
</evidence>
<evidence type="ECO:0000269" key="12">
    <source>
    </source>
</evidence>
<evidence type="ECO:0000269" key="13">
    <source>
    </source>
</evidence>
<evidence type="ECO:0000269" key="14">
    <source>
    </source>
</evidence>
<evidence type="ECO:0000303" key="15">
    <source>
    </source>
</evidence>
<evidence type="ECO:0000303" key="16">
    <source>
    </source>
</evidence>
<evidence type="ECO:0000305" key="17"/>
<evidence type="ECO:0007829" key="18">
    <source>
        <dbReference type="PDB" id="2H5G"/>
    </source>
</evidence>
<gene>
    <name type="primary">ALDH18A1</name>
    <name type="synonym">GSAS</name>
    <name type="synonym">P5CS</name>
    <name type="synonym">PYCS</name>
</gene>
<protein>
    <recommendedName>
        <fullName>Delta-1-pyrroline-5-carboxylate synthase</fullName>
        <shortName>P5CS</shortName>
    </recommendedName>
    <alternativeName>
        <fullName>Aldehyde dehydrogenase family 18 member A1</fullName>
    </alternativeName>
    <domain>
        <recommendedName>
            <fullName>Glutamate 5-kinase</fullName>
            <shortName>GK</shortName>
            <ecNumber evidence="11">2.7.2.11</ecNumber>
        </recommendedName>
        <alternativeName>
            <fullName>Gamma-glutamyl kinase</fullName>
        </alternativeName>
    </domain>
    <domain>
        <recommendedName>
            <fullName>Gamma-glutamyl phosphate reductase</fullName>
            <shortName>GPR</shortName>
            <ecNumber evidence="11">1.2.1.41</ecNumber>
        </recommendedName>
        <alternativeName>
            <fullName>Glutamate-5-semialdehyde dehydrogenase</fullName>
        </alternativeName>
        <alternativeName>
            <fullName>Glutamyl-gamma-semialdehyde dehydrogenase</fullName>
        </alternativeName>
    </domain>
</protein>
<keyword id="KW-0002">3D-structure</keyword>
<keyword id="KW-0025">Alternative splicing</keyword>
<keyword id="KW-0028">Amino-acid biosynthesis</keyword>
<keyword id="KW-0067">ATP-binding</keyword>
<keyword id="KW-0225">Disease variant</keyword>
<keyword id="KW-0890">Hereditary spastic paraplegia</keyword>
<keyword id="KW-0991">Intellectual disability</keyword>
<keyword id="KW-0418">Kinase</keyword>
<keyword id="KW-0496">Mitochondrion</keyword>
<keyword id="KW-0511">Multifunctional enzyme</keyword>
<keyword id="KW-0521">NADP</keyword>
<keyword id="KW-0523">Neurodegeneration</keyword>
<keyword id="KW-0547">Nucleotide-binding</keyword>
<keyword id="KW-0560">Oxidoreductase</keyword>
<keyword id="KW-0641">Proline biosynthesis</keyword>
<keyword id="KW-1267">Proteomics identification</keyword>
<keyword id="KW-1185">Reference proteome</keyword>
<keyword id="KW-0808">Transferase</keyword>
<comment type="function">
    <text evidence="3 4 11 12 14">Bifunctional enzyme that converts glutamate to glutamate 5-semialdehyde, an intermediate in the biosynthesis of proline, ornithine and arginine.</text>
</comment>
<comment type="catalytic activity">
    <reaction evidence="11">
        <text>L-glutamate + ATP = L-glutamyl 5-phosphate + ADP</text>
        <dbReference type="Rhea" id="RHEA:14877"/>
        <dbReference type="ChEBI" id="CHEBI:29985"/>
        <dbReference type="ChEBI" id="CHEBI:30616"/>
        <dbReference type="ChEBI" id="CHEBI:58274"/>
        <dbReference type="ChEBI" id="CHEBI:456216"/>
        <dbReference type="EC" id="2.7.2.11"/>
    </reaction>
</comment>
<comment type="catalytic activity">
    <reaction evidence="11">
        <text>L-glutamate 5-semialdehyde + phosphate + NADP(+) = L-glutamyl 5-phosphate + NADPH + H(+)</text>
        <dbReference type="Rhea" id="RHEA:19541"/>
        <dbReference type="ChEBI" id="CHEBI:15378"/>
        <dbReference type="ChEBI" id="CHEBI:43474"/>
        <dbReference type="ChEBI" id="CHEBI:57783"/>
        <dbReference type="ChEBI" id="CHEBI:58066"/>
        <dbReference type="ChEBI" id="CHEBI:58274"/>
        <dbReference type="ChEBI" id="CHEBI:58349"/>
        <dbReference type="EC" id="1.2.1.41"/>
    </reaction>
</comment>
<comment type="activity regulation">
    <text evidence="3">Isoform Short: Inhibited by L-ornithine with a Ki of approximately 0.25 mm. Isoform Long: Insensitive to ornithine inhibition. This is due to the two amino acid insert which abolishes feedback inhibition of P5CS activity by L-ornithine.</text>
</comment>
<comment type="pathway">
    <text evidence="11">Amino-acid biosynthesis; L-proline biosynthesis; L-glutamate 5-semialdehyde from L-glutamate: step 1/2.</text>
</comment>
<comment type="pathway">
    <text evidence="11">Amino-acid biosynthesis; L-proline biosynthesis; L-glutamate 5-semialdehyde from L-glutamate: step 2/2.</text>
</comment>
<comment type="subunit">
    <text evidence="11 12">Can form homodimers/multimers.</text>
</comment>
<comment type="interaction">
    <interactant intactId="EBI-1210304">
        <id>P54886</id>
    </interactant>
    <interactant intactId="EBI-741181">
        <id>Q6RW13</id>
        <label>AGTRAP</label>
    </interactant>
    <organismsDiffer>false</organismsDiffer>
    <experiments>3</experiments>
</comment>
<comment type="interaction">
    <interactant intactId="EBI-1210304">
        <id>P54886</id>
    </interactant>
    <interactant intactId="EBI-2548702">
        <id>Q96DZ9</id>
        <label>CMTM5</label>
    </interactant>
    <organismsDiffer>false</organismsDiffer>
    <experiments>3</experiments>
</comment>
<comment type="interaction">
    <interactant intactId="EBI-1210304">
        <id>P54886</id>
    </interactant>
    <interactant intactId="EBI-724524">
        <id>O75208</id>
        <label>COQ9</label>
    </interactant>
    <organismsDiffer>false</organismsDiffer>
    <experiments>3</experiments>
</comment>
<comment type="interaction">
    <interactant intactId="EBI-1210304">
        <id>P54886</id>
    </interactant>
    <interactant intactId="EBI-3917045">
        <id>Q6PI48</id>
        <label>DARS2</label>
    </interactant>
    <organismsDiffer>false</organismsDiffer>
    <experiments>3</experiments>
</comment>
<comment type="subcellular location">
    <subcellularLocation>
        <location evidence="11 12">Mitochondrion</location>
    </subcellularLocation>
    <subcellularLocation>
        <location evidence="13">Mitochondrion matrix</location>
    </subcellularLocation>
    <text evidence="13 14">Exhibits puncta-like structures inside mitochondria under nutrient stress (PubMed:32770108). When cellular dependence on oxidative phosphorylation increases, forms filaments, which may increase its activity, and is sequestered in a subset of atypical mitochondria that lack cristae and ATP synthase (PubMed:39506109).</text>
</comment>
<comment type="alternative products">
    <event type="alternative splicing"/>
    <isoform>
        <id>P54886-1</id>
        <name>Long</name>
        <sequence type="displayed"/>
    </isoform>
    <isoform>
        <id>P54886-2</id>
        <name>Short</name>
        <sequence type="described" ref="VSP_005215"/>
    </isoform>
</comment>
<comment type="disease" evidence="4 7 8 9">
    <disease id="DI-03310">
        <name>Cutis laxa, autosomal recessive, 3A</name>
        <acronym>ARCL3A</acronym>
        <description>A syndrome characterized by facial dysmorphism with a progeroid appearance, large and late-closing fontanel, cutis laxa, joint hyperlaxity, athetoid movements and hyperreflexia, pre- and postnatal growth retardation, intellectual deficit, developmental delay, and ophthalmologic abnormalities.</description>
        <dbReference type="MIM" id="219150"/>
    </disease>
    <text>The disease is caused by variants affecting the gene represented in this entry.</text>
</comment>
<comment type="disease" evidence="12">
    <disease id="DI-04558">
        <name>Cutis laxa, autosomal dominant, 3</name>
        <acronym>ADCL3</acronym>
        <description>A form of cutis laxa, a connective tissue disorder characterized by loose, hyperextensible skin with decreased resilience and elasticity leading to a premature aged appearance. Face, hands, feet, joints, and torso may be differentially affected. Additional variable clinical features are gastrointestinal diverticula, hernia, and genital prolapse. Rare manifestations are pulmonary artery stenosis, aortic aneurysm, bronchiectasis, and emphysema. ADCL3 patients manifest thin skin with visible veins and wrinkles, cataract or corneal clouding, moderate intellectual disability, muscular hypotonia with brisk muscle reflexes, clenched fingers, and pre- and postnatal growth retardation.</description>
        <dbReference type="MIM" id="616603"/>
    </disease>
    <text>The disease is caused by variants affecting the gene represented in this entry.</text>
</comment>
<comment type="disease" evidence="10 11">
    <disease id="DI-04556">
        <name>Spastic paraplegia 9A, autosomal dominant</name>
        <acronym>SPG9A</acronym>
        <description>A form of spastic paraplegia, a neurodegenerative disorder characterized by a slow, gradual, progressive weakness and spasticity of the lower limbs. Rate of progression and the severity of symptoms are quite variable. Initial symptoms may include difficulty with balance, weakness and stiffness in the legs, muscle spasms, and dragging the toes when walking. In some forms of the disorder, bladder symptoms (such as incontinence) may appear, or the weakness and stiffness may spread to other parts of the body. SPG9A patients have gait difficulties, motor neuropathy, and dysarthria. Additional variable features include cerebellar signs, cataract, pes cavus, and urinary urgency.</description>
        <dbReference type="MIM" id="601162"/>
    </disease>
    <text>The disease is caused by variants affecting the gene represented in this entry.</text>
</comment>
<comment type="disease" evidence="10">
    <disease id="DI-04557">
        <name>Spastic paraplegia 9B, autosomal recessive</name>
        <acronym>SPG9B</acronym>
        <description>A form of spastic paraplegia, a neurodegenerative disorder characterized by a slow, gradual, progressive weakness and spasticity of the lower limbs. Rate of progression and the severity of symptoms are quite variable. Initial symptoms may include difficulty with balance, weakness and stiffness in the legs, muscle spasms, and dragging the toes when walking. In some forms of the disorder, bladder symptoms (such as incontinence) may appear, or the weakness and stiffness may spread to other parts of the body. SPG9B is a complex form characterized by delayed psychomotor development, intellectual disability, and severe motor impairment. Dysmorphic facial features, tremor, and urinary incontinence are variably observed in SPG9B patients.</description>
        <dbReference type="MIM" id="616586"/>
    </disease>
    <text>The disease is caused by variants affecting the gene represented in this entry.</text>
</comment>
<comment type="similarity">
    <text evidence="17">In the N-terminal section; belongs to the glutamate 5-kinase family.</text>
</comment>
<comment type="similarity">
    <text evidence="17">In the C-terminal section; belongs to the gamma-glutamyl phosphate reductase family.</text>
</comment>
<comment type="sequence caution" evidence="17">
    <conflict type="erroneous initiation">
        <sequence resource="EMBL-CDS" id="BAH12086"/>
    </conflict>
    <text>Truncated N-terminus.</text>
</comment>
<comment type="sequence caution" evidence="17">
    <conflict type="erroneous initiation">
        <sequence resource="EMBL-CDS" id="BAH13064"/>
    </conflict>
    <text>Truncated N-terminus.</text>
</comment>
<organism>
    <name type="scientific">Homo sapiens</name>
    <name type="common">Human</name>
    <dbReference type="NCBI Taxonomy" id="9606"/>
    <lineage>
        <taxon>Eukaryota</taxon>
        <taxon>Metazoa</taxon>
        <taxon>Chordata</taxon>
        <taxon>Craniata</taxon>
        <taxon>Vertebrata</taxon>
        <taxon>Euteleostomi</taxon>
        <taxon>Mammalia</taxon>
        <taxon>Eutheria</taxon>
        <taxon>Euarchontoglires</taxon>
        <taxon>Primates</taxon>
        <taxon>Haplorrhini</taxon>
        <taxon>Catarrhini</taxon>
        <taxon>Hominidae</taxon>
        <taxon>Homo</taxon>
    </lineage>
</organism>
<dbReference type="EC" id="2.7.2.11" evidence="11"/>
<dbReference type="EC" id="1.2.1.41" evidence="11"/>
<dbReference type="EMBL" id="X94453">
    <property type="protein sequence ID" value="CAA64224.1"/>
    <property type="molecule type" value="mRNA"/>
</dbReference>
<dbReference type="EMBL" id="U76542">
    <property type="protein sequence ID" value="AAD17454.1"/>
    <property type="molecule type" value="mRNA"/>
</dbReference>
<dbReference type="EMBL" id="U68758">
    <property type="protein sequence ID" value="AAD00169.1"/>
    <property type="molecule type" value="mRNA"/>
</dbReference>
<dbReference type="EMBL" id="AK295487">
    <property type="protein sequence ID" value="BAH12086.1"/>
    <property type="status" value="ALT_INIT"/>
    <property type="molecule type" value="mRNA"/>
</dbReference>
<dbReference type="EMBL" id="AK299557">
    <property type="protein sequence ID" value="BAH13064.1"/>
    <property type="status" value="ALT_INIT"/>
    <property type="molecule type" value="mRNA"/>
</dbReference>
<dbReference type="EMBL" id="AK312271">
    <property type="protein sequence ID" value="BAG35201.1"/>
    <property type="molecule type" value="mRNA"/>
</dbReference>
<dbReference type="EMBL" id="AL356632">
    <property type="status" value="NOT_ANNOTATED_CDS"/>
    <property type="molecule type" value="Genomic_DNA"/>
</dbReference>
<dbReference type="EMBL" id="CH471066">
    <property type="protein sequence ID" value="EAW49995.1"/>
    <property type="molecule type" value="Genomic_DNA"/>
</dbReference>
<dbReference type="EMBL" id="CH471066">
    <property type="protein sequence ID" value="EAW49994.1"/>
    <property type="molecule type" value="Genomic_DNA"/>
</dbReference>
<dbReference type="EMBL" id="CH471066">
    <property type="protein sequence ID" value="EAW49996.1"/>
    <property type="molecule type" value="Genomic_DNA"/>
</dbReference>
<dbReference type="EMBL" id="CH471066">
    <property type="protein sequence ID" value="EAW49997.1"/>
    <property type="molecule type" value="Genomic_DNA"/>
</dbReference>
<dbReference type="EMBL" id="BC106054">
    <property type="protein sequence ID" value="AAI06055.1"/>
    <property type="molecule type" value="mRNA"/>
</dbReference>
<dbReference type="EMBL" id="BC117240">
    <property type="protein sequence ID" value="AAI17241.1"/>
    <property type="molecule type" value="mRNA"/>
</dbReference>
<dbReference type="EMBL" id="BC117242">
    <property type="protein sequence ID" value="AAI17243.1"/>
    <property type="molecule type" value="mRNA"/>
</dbReference>
<dbReference type="EMBL" id="BC143930">
    <property type="protein sequence ID" value="AAI43931.1"/>
    <property type="molecule type" value="mRNA"/>
</dbReference>
<dbReference type="CCDS" id="CCDS31257.1">
    <molecule id="P54886-2"/>
</dbReference>
<dbReference type="CCDS" id="CCDS7443.1">
    <molecule id="P54886-1"/>
</dbReference>
<dbReference type="RefSeq" id="NP_001017423.1">
    <molecule id="P54886-2"/>
    <property type="nucleotide sequence ID" value="NM_001017423.2"/>
</dbReference>
<dbReference type="RefSeq" id="NP_001310341.1">
    <property type="nucleotide sequence ID" value="NM_001323412.1"/>
</dbReference>
<dbReference type="RefSeq" id="NP_001310342.1">
    <molecule id="P54886-1"/>
    <property type="nucleotide sequence ID" value="NM_001323413.2"/>
</dbReference>
<dbReference type="RefSeq" id="NP_001310343.1">
    <molecule id="P54886-1"/>
    <property type="nucleotide sequence ID" value="NM_001323414.2"/>
</dbReference>
<dbReference type="RefSeq" id="NP_001310344.1">
    <molecule id="P54886-2"/>
    <property type="nucleotide sequence ID" value="NM_001323415.2"/>
</dbReference>
<dbReference type="RefSeq" id="NP_001310345.1">
    <property type="nucleotide sequence ID" value="NM_001323416.1"/>
</dbReference>
<dbReference type="RefSeq" id="NP_001310348.1">
    <property type="nucleotide sequence ID" value="NM_001323419.1"/>
</dbReference>
<dbReference type="RefSeq" id="NP_002851.2">
    <molecule id="P54886-1"/>
    <property type="nucleotide sequence ID" value="NM_002860.3"/>
</dbReference>
<dbReference type="PDB" id="2H5G">
    <property type="method" value="X-ray"/>
    <property type="resolution" value="2.25 A"/>
    <property type="chains" value="A/B=362-795"/>
</dbReference>
<dbReference type="PDBsum" id="2H5G"/>
<dbReference type="SMR" id="P54886"/>
<dbReference type="BioGRID" id="111790">
    <property type="interactions" value="215"/>
</dbReference>
<dbReference type="FunCoup" id="P54886">
    <property type="interactions" value="1320"/>
</dbReference>
<dbReference type="IntAct" id="P54886">
    <property type="interactions" value="90"/>
</dbReference>
<dbReference type="MINT" id="P54886"/>
<dbReference type="STRING" id="9606.ENSP00000360268"/>
<dbReference type="ChEMBL" id="CHEMBL4295784"/>
<dbReference type="DrugBank" id="DB00142">
    <property type="generic name" value="Glutamic acid"/>
</dbReference>
<dbReference type="GlyGen" id="P54886">
    <property type="glycosylation" value="3 sites, 1 N-linked glycan (1 site), 1 O-linked glycan (1 site)"/>
</dbReference>
<dbReference type="iPTMnet" id="P54886"/>
<dbReference type="MetOSite" id="P54886"/>
<dbReference type="PhosphoSitePlus" id="P54886"/>
<dbReference type="SwissPalm" id="P54886"/>
<dbReference type="BioMuta" id="ALDH18A1"/>
<dbReference type="DMDM" id="6226882"/>
<dbReference type="CPTAC" id="CPTAC-11"/>
<dbReference type="jPOST" id="P54886"/>
<dbReference type="MassIVE" id="P54886"/>
<dbReference type="PaxDb" id="9606-ENSP00000360268"/>
<dbReference type="PeptideAtlas" id="P54886"/>
<dbReference type="ProteomicsDB" id="56745">
    <molecule id="P54886-1"/>
</dbReference>
<dbReference type="ProteomicsDB" id="56746">
    <molecule id="P54886-2"/>
</dbReference>
<dbReference type="Pumba" id="P54886"/>
<dbReference type="Antibodypedia" id="2043">
    <property type="antibodies" value="207 antibodies from 31 providers"/>
</dbReference>
<dbReference type="DNASU" id="5832"/>
<dbReference type="Ensembl" id="ENST00000371221.3">
    <molecule id="P54886-2"/>
    <property type="protein sequence ID" value="ENSP00000360265.3"/>
    <property type="gene ID" value="ENSG00000059573.9"/>
</dbReference>
<dbReference type="Ensembl" id="ENST00000371224.7">
    <molecule id="P54886-1"/>
    <property type="protein sequence ID" value="ENSP00000360268.2"/>
    <property type="gene ID" value="ENSG00000059573.9"/>
</dbReference>
<dbReference type="GeneID" id="5832"/>
<dbReference type="KEGG" id="hsa:5832"/>
<dbReference type="MANE-Select" id="ENST00000371224.7">
    <property type="protein sequence ID" value="ENSP00000360268.2"/>
    <property type="RefSeq nucleotide sequence ID" value="NM_002860.4"/>
    <property type="RefSeq protein sequence ID" value="NP_002851.2"/>
</dbReference>
<dbReference type="UCSC" id="uc001kky.4">
    <molecule id="P54886-1"/>
    <property type="organism name" value="human"/>
</dbReference>
<dbReference type="AGR" id="HGNC:9722"/>
<dbReference type="CTD" id="5832"/>
<dbReference type="DisGeNET" id="5832"/>
<dbReference type="GeneCards" id="ALDH18A1"/>
<dbReference type="HGNC" id="HGNC:9722">
    <property type="gene designation" value="ALDH18A1"/>
</dbReference>
<dbReference type="HPA" id="ENSG00000059573">
    <property type="expression patterns" value="Tissue enhanced (salivary)"/>
</dbReference>
<dbReference type="MalaCards" id="ALDH18A1"/>
<dbReference type="MIM" id="138250">
    <property type="type" value="gene"/>
</dbReference>
<dbReference type="MIM" id="219150">
    <property type="type" value="phenotype"/>
</dbReference>
<dbReference type="MIM" id="601162">
    <property type="type" value="phenotype"/>
</dbReference>
<dbReference type="MIM" id="616586">
    <property type="type" value="phenotype"/>
</dbReference>
<dbReference type="MIM" id="616603">
    <property type="type" value="phenotype"/>
</dbReference>
<dbReference type="neXtProt" id="NX_P54886"/>
<dbReference type="OpenTargets" id="ENSG00000059573"/>
<dbReference type="Orphanet" id="35664">
    <property type="disease" value="ALDH18A1-related De Barsy syndrome"/>
</dbReference>
<dbReference type="Orphanet" id="90348">
    <property type="disease" value="Autosomal dominant cutis laxa"/>
</dbReference>
<dbReference type="Orphanet" id="447753">
    <property type="disease" value="Autosomal dominant spastic paraplegia type 9A"/>
</dbReference>
<dbReference type="Orphanet" id="447757">
    <property type="disease" value="Autosomal dominant spastic paraplegia type 9B"/>
</dbReference>
<dbReference type="Orphanet" id="447760">
    <property type="disease" value="Autosomal recessive spastic paraplegia type 9B"/>
</dbReference>
<dbReference type="PharmGKB" id="PA34065"/>
<dbReference type="VEuPathDB" id="HostDB:ENSG00000059573"/>
<dbReference type="eggNOG" id="KOG1154">
    <property type="taxonomic scope" value="Eukaryota"/>
</dbReference>
<dbReference type="eggNOG" id="KOG4165">
    <property type="taxonomic scope" value="Eukaryota"/>
</dbReference>
<dbReference type="GeneTree" id="ENSGT00500000044903"/>
<dbReference type="HOGENOM" id="CLU_016144_0_0_1"/>
<dbReference type="InParanoid" id="P54886"/>
<dbReference type="OMA" id="PPMFIVD"/>
<dbReference type="OrthoDB" id="1934954at2759"/>
<dbReference type="PAN-GO" id="P54886">
    <property type="GO annotations" value="2 GO annotations based on evolutionary models"/>
</dbReference>
<dbReference type="PhylomeDB" id="P54886"/>
<dbReference type="TreeFam" id="TF314372"/>
<dbReference type="BioCyc" id="MetaCyc:HS00730-MONOMER"/>
<dbReference type="PathwayCommons" id="P54886"/>
<dbReference type="Reactome" id="R-HSA-8964539">
    <property type="pathway name" value="Glutamate and glutamine metabolism"/>
</dbReference>
<dbReference type="Reactome" id="R-HSA-9837999">
    <property type="pathway name" value="Mitochondrial protein degradation"/>
</dbReference>
<dbReference type="SignaLink" id="P54886"/>
<dbReference type="UniPathway" id="UPA00098">
    <property type="reaction ID" value="UER00359"/>
</dbReference>
<dbReference type="UniPathway" id="UPA00098">
    <property type="reaction ID" value="UER00360"/>
</dbReference>
<dbReference type="BioGRID-ORCS" id="5832">
    <property type="hits" value="80 hits in 1162 CRISPR screens"/>
</dbReference>
<dbReference type="CD-CODE" id="DEE660B4">
    <property type="entry name" value="Stress granule"/>
</dbReference>
<dbReference type="ChiTaRS" id="ALDH18A1">
    <property type="organism name" value="human"/>
</dbReference>
<dbReference type="EvolutionaryTrace" id="P54886"/>
<dbReference type="GeneWiki" id="Aldehyde_dehydrogenase_18_family,_member_A1"/>
<dbReference type="GenomeRNAi" id="5832"/>
<dbReference type="Pharos" id="P54886">
    <property type="development level" value="Tbio"/>
</dbReference>
<dbReference type="PRO" id="PR:P54886"/>
<dbReference type="Proteomes" id="UP000005640">
    <property type="component" value="Chromosome 10"/>
</dbReference>
<dbReference type="RNAct" id="P54886">
    <property type="molecule type" value="protein"/>
</dbReference>
<dbReference type="Bgee" id="ENSG00000059573">
    <property type="expression patterns" value="Expressed in parotid gland and 188 other cell types or tissues"/>
</dbReference>
<dbReference type="GO" id="GO:0005743">
    <property type="term" value="C:mitochondrial inner membrane"/>
    <property type="evidence" value="ECO:0000304"/>
    <property type="project" value="Reactome"/>
</dbReference>
<dbReference type="GO" id="GO:0005759">
    <property type="term" value="C:mitochondrial matrix"/>
    <property type="evidence" value="ECO:0000314"/>
    <property type="project" value="FlyBase"/>
</dbReference>
<dbReference type="GO" id="GO:0005739">
    <property type="term" value="C:mitochondrion"/>
    <property type="evidence" value="ECO:0000314"/>
    <property type="project" value="HPA"/>
</dbReference>
<dbReference type="GO" id="GO:0005524">
    <property type="term" value="F:ATP binding"/>
    <property type="evidence" value="ECO:0007669"/>
    <property type="project" value="UniProtKB-KW"/>
</dbReference>
<dbReference type="GO" id="GO:0004349">
    <property type="term" value="F:glutamate 5-kinase activity"/>
    <property type="evidence" value="ECO:0000314"/>
    <property type="project" value="UniProtKB"/>
</dbReference>
<dbReference type="GO" id="GO:0004350">
    <property type="term" value="F:glutamate-5-semialdehyde dehydrogenase activity"/>
    <property type="evidence" value="ECO:0000314"/>
    <property type="project" value="UniProtKB"/>
</dbReference>
<dbReference type="GO" id="GO:0042802">
    <property type="term" value="F:identical protein binding"/>
    <property type="evidence" value="ECO:0000314"/>
    <property type="project" value="UniProtKB"/>
</dbReference>
<dbReference type="GO" id="GO:0003723">
    <property type="term" value="F:RNA binding"/>
    <property type="evidence" value="ECO:0007005"/>
    <property type="project" value="UniProtKB"/>
</dbReference>
<dbReference type="GO" id="GO:0019240">
    <property type="term" value="P:citrulline biosynthetic process"/>
    <property type="evidence" value="ECO:0000315"/>
    <property type="project" value="UniProtKB"/>
</dbReference>
<dbReference type="GO" id="GO:0006536">
    <property type="term" value="P:glutamate metabolic process"/>
    <property type="evidence" value="ECO:0000315"/>
    <property type="project" value="UniProtKB"/>
</dbReference>
<dbReference type="GO" id="GO:0055129">
    <property type="term" value="P:L-proline biosynthetic process"/>
    <property type="evidence" value="ECO:0007669"/>
    <property type="project" value="UniProtKB-UniPathway"/>
</dbReference>
<dbReference type="GO" id="GO:0006592">
    <property type="term" value="P:ornithine biosynthetic process"/>
    <property type="evidence" value="ECO:0000315"/>
    <property type="project" value="UniProtKB"/>
</dbReference>
<dbReference type="GO" id="GO:0006561">
    <property type="term" value="P:proline biosynthetic process"/>
    <property type="evidence" value="ECO:0000315"/>
    <property type="project" value="UniProtKB"/>
</dbReference>
<dbReference type="GO" id="GO:0009266">
    <property type="term" value="P:response to temperature stimulus"/>
    <property type="evidence" value="ECO:0007669"/>
    <property type="project" value="Ensembl"/>
</dbReference>
<dbReference type="CDD" id="cd04256">
    <property type="entry name" value="AAK_P5CS_ProBA"/>
    <property type="match status" value="1"/>
</dbReference>
<dbReference type="CDD" id="cd07079">
    <property type="entry name" value="ALDH_F18-19_ProA-GPR"/>
    <property type="match status" value="1"/>
</dbReference>
<dbReference type="FunFam" id="3.40.1160.10:FF:000010">
    <property type="entry name" value="Delta-1-pyrroline-5-carboxylate synthase"/>
    <property type="match status" value="1"/>
</dbReference>
<dbReference type="FunFam" id="3.40.309.10:FF:000011">
    <property type="entry name" value="Delta-1-pyrroline-5-carboxylate synthase"/>
    <property type="match status" value="1"/>
</dbReference>
<dbReference type="Gene3D" id="3.40.1160.10">
    <property type="entry name" value="Acetylglutamate kinase-like"/>
    <property type="match status" value="1"/>
</dbReference>
<dbReference type="Gene3D" id="3.40.605.10">
    <property type="entry name" value="Aldehyde Dehydrogenase, Chain A, domain 1"/>
    <property type="match status" value="1"/>
</dbReference>
<dbReference type="Gene3D" id="3.40.309.10">
    <property type="entry name" value="Aldehyde Dehydrogenase, Chain A, domain 2"/>
    <property type="match status" value="1"/>
</dbReference>
<dbReference type="HAMAP" id="MF_00412">
    <property type="entry name" value="ProA"/>
    <property type="match status" value="1"/>
</dbReference>
<dbReference type="HAMAP" id="MF_00456">
    <property type="entry name" value="ProB"/>
    <property type="match status" value="1"/>
</dbReference>
<dbReference type="InterPro" id="IPR036393">
    <property type="entry name" value="AceGlu_kinase-like_sf"/>
</dbReference>
<dbReference type="InterPro" id="IPR016161">
    <property type="entry name" value="Ald_DH/histidinol_DH"/>
</dbReference>
<dbReference type="InterPro" id="IPR016163">
    <property type="entry name" value="Ald_DH_C"/>
</dbReference>
<dbReference type="InterPro" id="IPR016162">
    <property type="entry name" value="Ald_DH_N"/>
</dbReference>
<dbReference type="InterPro" id="IPR015590">
    <property type="entry name" value="Aldehyde_DH_dom"/>
</dbReference>
<dbReference type="InterPro" id="IPR001048">
    <property type="entry name" value="Asp/Glu/Uridylate_kinase"/>
</dbReference>
<dbReference type="InterPro" id="IPR020593">
    <property type="entry name" value="G-glutamylP_reductase_CS"/>
</dbReference>
<dbReference type="InterPro" id="IPR041744">
    <property type="entry name" value="G5K_ProBA"/>
</dbReference>
<dbReference type="InterPro" id="IPR001057">
    <property type="entry name" value="Glu/AcGlu_kinase"/>
</dbReference>
<dbReference type="InterPro" id="IPR005715">
    <property type="entry name" value="Glu_5kinase/COase_Synthase"/>
</dbReference>
<dbReference type="InterPro" id="IPR019797">
    <property type="entry name" value="Glutamate_5-kinase_CS"/>
</dbReference>
<dbReference type="InterPro" id="IPR000965">
    <property type="entry name" value="GPR_dom"/>
</dbReference>
<dbReference type="InterPro" id="IPR005766">
    <property type="entry name" value="P5_carboxy_syn"/>
</dbReference>
<dbReference type="NCBIfam" id="TIGR01092">
    <property type="entry name" value="P5CS"/>
    <property type="match status" value="1"/>
</dbReference>
<dbReference type="NCBIfam" id="NF001221">
    <property type="entry name" value="PRK00197.1"/>
    <property type="match status" value="1"/>
</dbReference>
<dbReference type="NCBIfam" id="TIGR00407">
    <property type="entry name" value="proA"/>
    <property type="match status" value="1"/>
</dbReference>
<dbReference type="PANTHER" id="PTHR11063:SF8">
    <property type="entry name" value="DELTA-1-PYRROLINE-5-CARBOXYLATE SYNTHASE"/>
    <property type="match status" value="1"/>
</dbReference>
<dbReference type="PANTHER" id="PTHR11063">
    <property type="entry name" value="GLUTAMATE SEMIALDEHYDE DEHYDROGENASE"/>
    <property type="match status" value="1"/>
</dbReference>
<dbReference type="Pfam" id="PF00696">
    <property type="entry name" value="AA_kinase"/>
    <property type="match status" value="1"/>
</dbReference>
<dbReference type="Pfam" id="PF00171">
    <property type="entry name" value="Aldedh"/>
    <property type="match status" value="1"/>
</dbReference>
<dbReference type="PIRSF" id="PIRSF036429">
    <property type="entry name" value="P5C_syn"/>
    <property type="match status" value="1"/>
</dbReference>
<dbReference type="PRINTS" id="PR00474">
    <property type="entry name" value="GLU5KINASE"/>
</dbReference>
<dbReference type="SUPFAM" id="SSF53720">
    <property type="entry name" value="ALDH-like"/>
    <property type="match status" value="1"/>
</dbReference>
<dbReference type="SUPFAM" id="SSF53633">
    <property type="entry name" value="Carbamate kinase-like"/>
    <property type="match status" value="1"/>
</dbReference>
<dbReference type="PROSITE" id="PS00902">
    <property type="entry name" value="GLUTAMATE_5_KINASE"/>
    <property type="match status" value="1"/>
</dbReference>
<dbReference type="PROSITE" id="PS01223">
    <property type="entry name" value="PROA"/>
    <property type="match status" value="1"/>
</dbReference>
<reference key="1">
    <citation type="journal article" date="1996" name="C. R. Acad. Sci. III, Sci. Vie">
        <title>Database cloning human delta 1-pyrroline-5-carboxylate synthetase (P5CS) cDNA: a bifunctional enzyme catalyzing the first 2 steps in proline biosynthesis.</title>
        <authorList>
            <person name="Aral B."/>
            <person name="Schlenzig J.S."/>
            <person name="Liu G."/>
            <person name="Kamoun P."/>
        </authorList>
    </citation>
    <scope>NUCLEOTIDE SEQUENCE [MRNA] (ISOFORM LONG)</scope>
    <source>
        <tissue>Kidney</tissue>
    </source>
</reference>
<reference key="2">
    <citation type="journal article" date="1999" name="J. Biol. Chem.">
        <title>Molecular enzymology of mammalian delta1-pyrroline-5-carboxylate synthase. Alternative splice donor utilization generates isoforms with different sensitivity to ornithine inhibition.</title>
        <authorList>
            <person name="Hu C.A."/>
            <person name="Lin W.-W."/>
            <person name="Obie C."/>
            <person name="Valle D."/>
        </authorList>
    </citation>
    <scope>NUCLEOTIDE SEQUENCE [MRNA] (ISOFORMS LONG AND SHORT)</scope>
    <scope>FUNCTION</scope>
    <scope>TISSUE SPECIFICITY</scope>
    <scope>ACTIVITY REGULATION (ISOFORMS LONG AND SHORT)</scope>
    <source>
        <tissue>Small intestine</tissue>
    </source>
</reference>
<reference key="3">
    <citation type="journal article" date="2004" name="Nat. Genet.">
        <title>Complete sequencing and characterization of 21,243 full-length human cDNAs.</title>
        <authorList>
            <person name="Ota T."/>
            <person name="Suzuki Y."/>
            <person name="Nishikawa T."/>
            <person name="Otsuki T."/>
            <person name="Sugiyama T."/>
            <person name="Irie R."/>
            <person name="Wakamatsu A."/>
            <person name="Hayashi K."/>
            <person name="Sato H."/>
            <person name="Nagai K."/>
            <person name="Kimura K."/>
            <person name="Makita H."/>
            <person name="Sekine M."/>
            <person name="Obayashi M."/>
            <person name="Nishi T."/>
            <person name="Shibahara T."/>
            <person name="Tanaka T."/>
            <person name="Ishii S."/>
            <person name="Yamamoto J."/>
            <person name="Saito K."/>
            <person name="Kawai Y."/>
            <person name="Isono Y."/>
            <person name="Nakamura Y."/>
            <person name="Nagahari K."/>
            <person name="Murakami K."/>
            <person name="Yasuda T."/>
            <person name="Iwayanagi T."/>
            <person name="Wagatsuma M."/>
            <person name="Shiratori A."/>
            <person name="Sudo H."/>
            <person name="Hosoiri T."/>
            <person name="Kaku Y."/>
            <person name="Kodaira H."/>
            <person name="Kondo H."/>
            <person name="Sugawara M."/>
            <person name="Takahashi M."/>
            <person name="Kanda K."/>
            <person name="Yokoi T."/>
            <person name="Furuya T."/>
            <person name="Kikkawa E."/>
            <person name="Omura Y."/>
            <person name="Abe K."/>
            <person name="Kamihara K."/>
            <person name="Katsuta N."/>
            <person name="Sato K."/>
            <person name="Tanikawa M."/>
            <person name="Yamazaki M."/>
            <person name="Ninomiya K."/>
            <person name="Ishibashi T."/>
            <person name="Yamashita H."/>
            <person name="Murakawa K."/>
            <person name="Fujimori K."/>
            <person name="Tanai H."/>
            <person name="Kimata M."/>
            <person name="Watanabe M."/>
            <person name="Hiraoka S."/>
            <person name="Chiba Y."/>
            <person name="Ishida S."/>
            <person name="Ono Y."/>
            <person name="Takiguchi S."/>
            <person name="Watanabe S."/>
            <person name="Yosida M."/>
            <person name="Hotuta T."/>
            <person name="Kusano J."/>
            <person name="Kanehori K."/>
            <person name="Takahashi-Fujii A."/>
            <person name="Hara H."/>
            <person name="Tanase T.-O."/>
            <person name="Nomura Y."/>
            <person name="Togiya S."/>
            <person name="Komai F."/>
            <person name="Hara R."/>
            <person name="Takeuchi K."/>
            <person name="Arita M."/>
            <person name="Imose N."/>
            <person name="Musashino K."/>
            <person name="Yuuki H."/>
            <person name="Oshima A."/>
            <person name="Sasaki N."/>
            <person name="Aotsuka S."/>
            <person name="Yoshikawa Y."/>
            <person name="Matsunawa H."/>
            <person name="Ichihara T."/>
            <person name="Shiohata N."/>
            <person name="Sano S."/>
            <person name="Moriya S."/>
            <person name="Momiyama H."/>
            <person name="Satoh N."/>
            <person name="Takami S."/>
            <person name="Terashima Y."/>
            <person name="Suzuki O."/>
            <person name="Nakagawa S."/>
            <person name="Senoh A."/>
            <person name="Mizoguchi H."/>
            <person name="Goto Y."/>
            <person name="Shimizu F."/>
            <person name="Wakebe H."/>
            <person name="Hishigaki H."/>
            <person name="Watanabe T."/>
            <person name="Sugiyama A."/>
            <person name="Takemoto M."/>
            <person name="Kawakami B."/>
            <person name="Yamazaki M."/>
            <person name="Watanabe K."/>
            <person name="Kumagai A."/>
            <person name="Itakura S."/>
            <person name="Fukuzumi Y."/>
            <person name="Fujimori Y."/>
            <person name="Komiyama M."/>
            <person name="Tashiro H."/>
            <person name="Tanigami A."/>
            <person name="Fujiwara T."/>
            <person name="Ono T."/>
            <person name="Yamada K."/>
            <person name="Fujii Y."/>
            <person name="Ozaki K."/>
            <person name="Hirao M."/>
            <person name="Ohmori Y."/>
            <person name="Kawabata A."/>
            <person name="Hikiji T."/>
            <person name="Kobatake N."/>
            <person name="Inagaki H."/>
            <person name="Ikema Y."/>
            <person name="Okamoto S."/>
            <person name="Okitani R."/>
            <person name="Kawakami T."/>
            <person name="Noguchi S."/>
            <person name="Itoh T."/>
            <person name="Shigeta K."/>
            <person name="Senba T."/>
            <person name="Matsumura K."/>
            <person name="Nakajima Y."/>
            <person name="Mizuno T."/>
            <person name="Morinaga M."/>
            <person name="Sasaki M."/>
            <person name="Togashi T."/>
            <person name="Oyama M."/>
            <person name="Hata H."/>
            <person name="Watanabe M."/>
            <person name="Komatsu T."/>
            <person name="Mizushima-Sugano J."/>
            <person name="Satoh T."/>
            <person name="Shirai Y."/>
            <person name="Takahashi Y."/>
            <person name="Nakagawa K."/>
            <person name="Okumura K."/>
            <person name="Nagase T."/>
            <person name="Nomura N."/>
            <person name="Kikuchi H."/>
            <person name="Masuho Y."/>
            <person name="Yamashita R."/>
            <person name="Nakai K."/>
            <person name="Yada T."/>
            <person name="Nakamura Y."/>
            <person name="Ohara O."/>
            <person name="Isogai T."/>
            <person name="Sugano S."/>
        </authorList>
    </citation>
    <scope>NUCLEOTIDE SEQUENCE [LARGE SCALE MRNA] (ISOFORM LONG)</scope>
    <scope>VARIANT ILE-299</scope>
    <source>
        <tissue>Brain</tissue>
        <tissue>Hippocampus</tissue>
    </source>
</reference>
<reference key="4">
    <citation type="journal article" date="2004" name="Nature">
        <title>The DNA sequence and comparative analysis of human chromosome 10.</title>
        <authorList>
            <person name="Deloukas P."/>
            <person name="Earthrowl M.E."/>
            <person name="Grafham D.V."/>
            <person name="Rubenfield M."/>
            <person name="French L."/>
            <person name="Steward C.A."/>
            <person name="Sims S.K."/>
            <person name="Jones M.C."/>
            <person name="Searle S."/>
            <person name="Scott C."/>
            <person name="Howe K."/>
            <person name="Hunt S.E."/>
            <person name="Andrews T.D."/>
            <person name="Gilbert J.G.R."/>
            <person name="Swarbreck D."/>
            <person name="Ashurst J.L."/>
            <person name="Taylor A."/>
            <person name="Battles J."/>
            <person name="Bird C.P."/>
            <person name="Ainscough R."/>
            <person name="Almeida J.P."/>
            <person name="Ashwell R.I.S."/>
            <person name="Ambrose K.D."/>
            <person name="Babbage A.K."/>
            <person name="Bagguley C.L."/>
            <person name="Bailey J."/>
            <person name="Banerjee R."/>
            <person name="Bates K."/>
            <person name="Beasley H."/>
            <person name="Bray-Allen S."/>
            <person name="Brown A.J."/>
            <person name="Brown J.Y."/>
            <person name="Burford D.C."/>
            <person name="Burrill W."/>
            <person name="Burton J."/>
            <person name="Cahill P."/>
            <person name="Camire D."/>
            <person name="Carter N.P."/>
            <person name="Chapman J.C."/>
            <person name="Clark S.Y."/>
            <person name="Clarke G."/>
            <person name="Clee C.M."/>
            <person name="Clegg S."/>
            <person name="Corby N."/>
            <person name="Coulson A."/>
            <person name="Dhami P."/>
            <person name="Dutta I."/>
            <person name="Dunn M."/>
            <person name="Faulkner L."/>
            <person name="Frankish A."/>
            <person name="Frankland J.A."/>
            <person name="Garner P."/>
            <person name="Garnett J."/>
            <person name="Gribble S."/>
            <person name="Griffiths C."/>
            <person name="Grocock R."/>
            <person name="Gustafson E."/>
            <person name="Hammond S."/>
            <person name="Harley J.L."/>
            <person name="Hart E."/>
            <person name="Heath P.D."/>
            <person name="Ho T.P."/>
            <person name="Hopkins B."/>
            <person name="Horne J."/>
            <person name="Howden P.J."/>
            <person name="Huckle E."/>
            <person name="Hynds C."/>
            <person name="Johnson C."/>
            <person name="Johnson D."/>
            <person name="Kana A."/>
            <person name="Kay M."/>
            <person name="Kimberley A.M."/>
            <person name="Kershaw J.K."/>
            <person name="Kokkinaki M."/>
            <person name="Laird G.K."/>
            <person name="Lawlor S."/>
            <person name="Lee H.M."/>
            <person name="Leongamornlert D.A."/>
            <person name="Laird G."/>
            <person name="Lloyd C."/>
            <person name="Lloyd D.M."/>
            <person name="Loveland J."/>
            <person name="Lovell J."/>
            <person name="McLaren S."/>
            <person name="McLay K.E."/>
            <person name="McMurray A."/>
            <person name="Mashreghi-Mohammadi M."/>
            <person name="Matthews L."/>
            <person name="Milne S."/>
            <person name="Nickerson T."/>
            <person name="Nguyen M."/>
            <person name="Overton-Larty E."/>
            <person name="Palmer S.A."/>
            <person name="Pearce A.V."/>
            <person name="Peck A.I."/>
            <person name="Pelan S."/>
            <person name="Phillimore B."/>
            <person name="Porter K."/>
            <person name="Rice C.M."/>
            <person name="Rogosin A."/>
            <person name="Ross M.T."/>
            <person name="Sarafidou T."/>
            <person name="Sehra H.K."/>
            <person name="Shownkeen R."/>
            <person name="Skuce C.D."/>
            <person name="Smith M."/>
            <person name="Standring L."/>
            <person name="Sycamore N."/>
            <person name="Tester J."/>
            <person name="Thorpe A."/>
            <person name="Torcasso W."/>
            <person name="Tracey A."/>
            <person name="Tromans A."/>
            <person name="Tsolas J."/>
            <person name="Wall M."/>
            <person name="Walsh J."/>
            <person name="Wang H."/>
            <person name="Weinstock K."/>
            <person name="West A.P."/>
            <person name="Willey D.L."/>
            <person name="Whitehead S.L."/>
            <person name="Wilming L."/>
            <person name="Wray P.W."/>
            <person name="Young L."/>
            <person name="Chen Y."/>
            <person name="Lovering R.C."/>
            <person name="Moschonas N.K."/>
            <person name="Siebert R."/>
            <person name="Fechtel K."/>
            <person name="Bentley D."/>
            <person name="Durbin R.M."/>
            <person name="Hubbard T."/>
            <person name="Doucette-Stamm L."/>
            <person name="Beck S."/>
            <person name="Smith D.R."/>
            <person name="Rogers J."/>
        </authorList>
    </citation>
    <scope>NUCLEOTIDE SEQUENCE [LARGE SCALE GENOMIC DNA]</scope>
</reference>
<reference key="5">
    <citation type="submission" date="2005-09" db="EMBL/GenBank/DDBJ databases">
        <authorList>
            <person name="Mural R.J."/>
            <person name="Istrail S."/>
            <person name="Sutton G.G."/>
            <person name="Florea L."/>
            <person name="Halpern A.L."/>
            <person name="Mobarry C.M."/>
            <person name="Lippert R."/>
            <person name="Walenz B."/>
            <person name="Shatkay H."/>
            <person name="Dew I."/>
            <person name="Miller J.R."/>
            <person name="Flanigan M.J."/>
            <person name="Edwards N.J."/>
            <person name="Bolanos R."/>
            <person name="Fasulo D."/>
            <person name="Halldorsson B.V."/>
            <person name="Hannenhalli S."/>
            <person name="Turner R."/>
            <person name="Yooseph S."/>
            <person name="Lu F."/>
            <person name="Nusskern D.R."/>
            <person name="Shue B.C."/>
            <person name="Zheng X.H."/>
            <person name="Zhong F."/>
            <person name="Delcher A.L."/>
            <person name="Huson D.H."/>
            <person name="Kravitz S.A."/>
            <person name="Mouchard L."/>
            <person name="Reinert K."/>
            <person name="Remington K.A."/>
            <person name="Clark A.G."/>
            <person name="Waterman M.S."/>
            <person name="Eichler E.E."/>
            <person name="Adams M.D."/>
            <person name="Hunkapiller M.W."/>
            <person name="Myers E.W."/>
            <person name="Venter J.C."/>
        </authorList>
    </citation>
    <scope>NUCLEOTIDE SEQUENCE [LARGE SCALE GENOMIC DNA]</scope>
</reference>
<reference key="6">
    <citation type="journal article" date="2004" name="Genome Res.">
        <title>The status, quality, and expansion of the NIH full-length cDNA project: the Mammalian Gene Collection (MGC).</title>
        <authorList>
            <consortium name="The MGC Project Team"/>
        </authorList>
    </citation>
    <scope>NUCLEOTIDE SEQUENCE [LARGE SCALE MRNA] (ISOFORMS LONG AND SHORT)</scope>
    <scope>VARIANTS ILE-299 AND TYR-372</scope>
    <source>
        <tissue>Brain</tissue>
        <tissue>Uterus</tissue>
    </source>
</reference>
<reference key="7">
    <citation type="journal article" date="2003" name="Nature">
        <title>Proteomic characterization of the human centrosome by protein correlation profiling.</title>
        <authorList>
            <person name="Andersen J.S."/>
            <person name="Wilkinson C.J."/>
            <person name="Mayor T."/>
            <person name="Mortensen P."/>
            <person name="Nigg E.A."/>
            <person name="Mann M."/>
        </authorList>
    </citation>
    <scope>IDENTIFICATION BY MASS SPECTROMETRY</scope>
    <source>
        <tissue>Lymphoblast</tissue>
    </source>
</reference>
<reference key="8">
    <citation type="journal article" date="2011" name="BMC Syst. Biol.">
        <title>Initial characterization of the human central proteome.</title>
        <authorList>
            <person name="Burkard T.R."/>
            <person name="Planyavsky M."/>
            <person name="Kaupe I."/>
            <person name="Breitwieser F.P."/>
            <person name="Buerckstuemmer T."/>
            <person name="Bennett K.L."/>
            <person name="Superti-Furga G."/>
            <person name="Colinge J."/>
        </authorList>
    </citation>
    <scope>IDENTIFICATION BY MASS SPECTROMETRY [LARGE SCALE ANALYSIS]</scope>
</reference>
<reference key="9">
    <citation type="journal article" date="2012" name="J. Inherit. Metab. Dis.">
        <title>Understanding pyrroline-5-carboxylate synthetase deficiency: clinical, molecular, functional, and expression studies, structure-based analysis, and novel therapy with arginine.</title>
        <authorList>
            <person name="Martinelli D."/>
            <person name="Haeberle J."/>
            <person name="Rubio V."/>
            <person name="Giunta C."/>
            <person name="Hausser I."/>
            <person name="Carrozzo R."/>
            <person name="Gougeard N."/>
            <person name="Marco-Marin C."/>
            <person name="Goffredo B.M."/>
            <person name="Meschini M.C."/>
            <person name="Bevivino E."/>
            <person name="Boenzi S."/>
            <person name="Colafati G.S."/>
            <person name="Brancati F."/>
            <person name="Baumgartner M.R."/>
            <person name="Dionisi-Vici C."/>
        </authorList>
    </citation>
    <scope>INVOLVEMENT IN ARCL3A</scope>
    <scope>VARIANTS ARCL3A ARG-93 AND ILE-299</scope>
</reference>
<reference key="10">
    <citation type="journal article" date="2014" name="Eur. J. Paediatr. Neurol.">
        <title>Cutis laxa, fat pads and retinopathy due to ALDH18A1 mutation and review of the literature.</title>
        <authorList>
            <person name="Wolthuis D.F."/>
            <person name="van Asbeck E."/>
            <person name="Mohamed M."/>
            <person name="Gardeitchik T."/>
            <person name="Lim-Melia E.R."/>
            <person name="Wevers R.A."/>
            <person name="Morava E."/>
        </authorList>
    </citation>
    <scope>INVOLVEMENT IN ARCL3A</scope>
    <scope>VARIANT ARCL3A CYS-782</scope>
</reference>
<reference key="11">
    <citation type="journal article" date="2014" name="J. Proteomics">
        <title>An enzyme assisted RP-RPLC approach for in-depth analysis of human liver phosphoproteome.</title>
        <authorList>
            <person name="Bian Y."/>
            <person name="Song C."/>
            <person name="Cheng K."/>
            <person name="Dong M."/>
            <person name="Wang F."/>
            <person name="Huang J."/>
            <person name="Sun D."/>
            <person name="Wang L."/>
            <person name="Ye M."/>
            <person name="Zou H."/>
        </authorList>
    </citation>
    <scope>IDENTIFICATION BY MASS SPECTROMETRY [LARGE SCALE ANALYSIS]</scope>
    <source>
        <tissue>Liver</tissue>
    </source>
</reference>
<reference key="12">
    <citation type="journal article" date="2015" name="Am. J. Hum. Genet.">
        <title>Recurrent de novo mutations affecting residue Arg138 of pyrroline-5-carboxylate synthase cause a progeroid form of autosomal-dominant cutis laxa.</title>
        <authorList>
            <person name="Fischer-Zirnsak B."/>
            <person name="Escande-Beillard N."/>
            <person name="Ganesh J."/>
            <person name="Tan Y.X."/>
            <person name="Al Bughaili M."/>
            <person name="Lin A.E."/>
            <person name="Sahai I."/>
            <person name="Bahena P."/>
            <person name="Reichert S.L."/>
            <person name="Loh A."/>
            <person name="Wright G.D."/>
            <person name="Liu J."/>
            <person name="Rahikkala E."/>
            <person name="Pivnick E.K."/>
            <person name="Choudhri A.F."/>
            <person name="Krueger U."/>
            <person name="Zemojtel T."/>
            <person name="van Ravenswaaij-Arts C."/>
            <person name="Mostafavi R."/>
            <person name="Stolte-Dijkstra I."/>
            <person name="Symoens S."/>
            <person name="Pajunen L."/>
            <person name="Al-Gazali L."/>
            <person name="Meierhofer D."/>
            <person name="Robinson P.N."/>
            <person name="Mundlos S."/>
            <person name="Villarroel C.E."/>
            <person name="Byers P."/>
            <person name="Masri A."/>
            <person name="Robertson S.P."/>
            <person name="Schwarze U."/>
            <person name="Callewaert B."/>
            <person name="Reversade B."/>
            <person name="Kornak U."/>
        </authorList>
    </citation>
    <scope>FUNCTION</scope>
    <scope>SUBCELLULAR LOCATION</scope>
    <scope>SUBUNIT</scope>
    <scope>INVOLVEMENT IN ADCL3</scope>
    <scope>VARIANTS ADCL3 GLN-138; LEU-138 AND TRP-138</scope>
    <scope>CHARACTERIZATION OF VARIANT ADCL3 TRP-138</scope>
</reference>
<reference key="13">
    <citation type="journal article" date="2015" name="Brain">
        <title>Alteration of ornithine metabolism leads to dominant and recessive hereditary spastic paraplegia.</title>
        <authorList>
            <person name="Coutelier M."/>
            <person name="Goizet C."/>
            <person name="Durr A."/>
            <person name="Habarou F."/>
            <person name="Morais S."/>
            <person name="Dionne-Laporte A."/>
            <person name="Tao F."/>
            <person name="Konop J."/>
            <person name="Stoll M."/>
            <person name="Charles P."/>
            <person name="Jacoupy M."/>
            <person name="Matusiak R."/>
            <person name="Alonso I."/>
            <person name="Tallaksen C."/>
            <person name="Mairey M."/>
            <person name="Kennerson M."/>
            <person name="Gaussen M."/>
            <person name="Schule R."/>
            <person name="Janin M."/>
            <person name="Morice-Picard F."/>
            <person name="Durand C.M."/>
            <person name="Depienne C."/>
            <person name="Calvas P."/>
            <person name="Coutinho P."/>
            <person name="Saudubray J.M."/>
            <person name="Rouleau G."/>
            <person name="Brice A."/>
            <person name="Nicholson G."/>
            <person name="Darios F."/>
            <person name="Loureiro J.L."/>
            <person name="Zuchner S."/>
            <person name="Ottolenghi C."/>
            <person name="Mochel F."/>
            <person name="Stevanin G."/>
        </authorList>
    </citation>
    <scope>INVOLVEMENT IN SPG9A</scope>
    <scope>INVOLVEMENT IN SPG9B</scope>
    <scope>VARIANTS SPG9A ALA-120; GLN-252; PHE-652 AND LEU-665</scope>
    <scope>VARIANTS SPG9B HIS-128; PRO-637 AND HIS-715</scope>
</reference>
<reference key="14">
    <citation type="journal article" date="2015" name="Proteomics">
        <title>N-terminome analysis of the human mitochondrial proteome.</title>
        <authorList>
            <person name="Vaca Jacome A.S."/>
            <person name="Rabilloud T."/>
            <person name="Schaeffer-Reiss C."/>
            <person name="Rompais M."/>
            <person name="Ayoub D."/>
            <person name="Lane L."/>
            <person name="Bairoch A."/>
            <person name="Van Dorsselaer A."/>
            <person name="Carapito C."/>
        </authorList>
    </citation>
    <scope>IDENTIFICATION BY MASS SPECTROMETRY [LARGE SCALE ANALYSIS]</scope>
</reference>
<reference key="15">
    <citation type="journal article" date="2016" name="Brain">
        <title>ALDH18A1 gene mutations cause dominant spastic paraplegia SPG9: loss of function effect and plausibility of a dominant negative mechanism.</title>
        <authorList>
            <person name="Panza E."/>
            <person name="Escamilla-Honrubia J.M."/>
            <person name="Marco-Marin C."/>
            <person name="Gougeard N."/>
            <person name="De Michele G."/>
            <person name="Morra V.B."/>
            <person name="Liguori R."/>
            <person name="Salviati L."/>
            <person name="Donati M.A."/>
            <person name="Cusano R."/>
            <person name="Pippucci T."/>
            <person name="Ravazzolo R."/>
            <person name="Nemeth A.H."/>
            <person name="Smithson S."/>
            <person name="Davies S."/>
            <person name="Hurst J.A."/>
            <person name="Bordo D."/>
            <person name="Rubio V."/>
            <person name="Seri M."/>
        </authorList>
    </citation>
    <scope>FUNCTION</scope>
    <scope>CATALYTIC ACTIVITY</scope>
    <scope>PATHWAY</scope>
    <scope>SUBUNIT</scope>
    <scope>SUBCELLULAR LOCATION</scope>
    <scope>INVOLVEMENT IN SPG9A</scope>
    <scope>VARIANTS SPG9A LEU-243 AND GLN-252</scope>
    <scope>CHARACTERIZATION OF VARIANTS SPG9A LEU-243 AND GLN-252</scope>
</reference>
<reference key="16">
    <citation type="journal article" date="2021" name="Cell Death Differ.">
        <title>Pyrroline-5-carboxylate synthase senses cellular stress and modulates metabolism by regulating mitochondrial respiration.</title>
        <authorList>
            <person name="Yang Z."/>
            <person name="Zhao X."/>
            <person name="Shang W."/>
            <person name="Liu Y."/>
            <person name="Ji J.F."/>
            <person name="Liu J.P."/>
            <person name="Tong C."/>
        </authorList>
    </citation>
    <scope>SUBCELLULAR LOCATION</scope>
    <scope>CHARACTERIZATION OF VARIANTS GLN-84; ARG-93 AND TRP-138</scope>
    <scope>MUTAGENESIS OF LYS-76; ASP-247; LYS-311 AND CYS-612</scope>
</reference>
<reference key="17">
    <citation type="journal article" date="2024" name="Nature">
        <title>Cellular ATP demand creates metabolically distinct subpopulations of mitochondria.</title>
        <authorList>
            <person name="Ryu K.W."/>
            <person name="Fung T.S."/>
            <person name="Baker D.C."/>
            <person name="Saoi M."/>
            <person name="Park J."/>
            <person name="Febres-Aldana C.A."/>
            <person name="Aly R.G."/>
            <person name="Cui R."/>
            <person name="Sharma A."/>
            <person name="Fu Y."/>
            <person name="Jones O.L."/>
            <person name="Cai X."/>
            <person name="Pasolli H.A."/>
            <person name="Cross J.R."/>
            <person name="Rudin C.M."/>
            <person name="Thompson C.B."/>
        </authorList>
    </citation>
    <scope>FUNCTION</scope>
    <scope>CHARACTERIZATION OF VARIANT TRP-138</scope>
    <scope>MUTAGENESIS OF CYS-612</scope>
</reference>
<reference key="18">
    <citation type="submission" date="2011-07" db="PDB data bank">
        <title>Crystal structure of human pyrroline-5-carboxylate synthetase.</title>
        <authorList>
            <consortium name="Structural genomics consortium (SGC)"/>
        </authorList>
    </citation>
    <scope>X-RAY CRYSTALLOGRAPHY (2.25 ANGSTROMS) OF 362-795</scope>
</reference>
<reference key="19">
    <citation type="journal article" date="2000" name="Hum. Mol. Genet.">
        <title>Hyperammonemia with reduced ornithine, citrulline, arginine and proline: a new inborn error caused by a mutation in the gene encoding delta(1)-pyrroline-5-carboxylate synthase.</title>
        <authorList>
            <person name="Baumgartner M.R."/>
            <person name="Hu C.A."/>
            <person name="Almashanu S."/>
            <person name="Steel G."/>
            <person name="Obie C."/>
            <person name="Aral B."/>
            <person name="Rabier D."/>
            <person name="Kamoun P."/>
            <person name="Saudubray J.-M."/>
            <person name="Valle D."/>
        </authorList>
    </citation>
    <scope>VARIANT ARCL3A GLN-84</scope>
    <scope>CHARACTERIZATION OF VARIANT ARCL3A GLN-84</scope>
    <scope>FUNCTION</scope>
    <scope>CATALYTIC ACTIVITY</scope>
</reference>
<reference key="20">
    <citation type="journal article" date="2008" name="Eur. J. Hum. Genet.">
        <title>A missense mutation in ALDH18A1, encoding Delta1-pyrroline-5-carboxylate synthase (P5CS), causes an autosomal recessive neurocutaneous syndrome.</title>
        <authorList>
            <person name="Bicknell L.S."/>
            <person name="Pitt J."/>
            <person name="Aftimos S."/>
            <person name="Ramadas R."/>
            <person name="Maw M.A."/>
            <person name="Robertson S.P."/>
        </authorList>
    </citation>
    <scope>VARIANT ARCL3A TYR-784</scope>
    <scope>CHARACTERIZATION OF VARIANT ARCL3A TYR-784</scope>
</reference>